<accession>Q29244</accession>
<name>PIGR_PIG</name>
<gene>
    <name type="primary">PIGR</name>
</gene>
<reference key="1">
    <citation type="journal article" date="1996" name="Mamm. Genome">
        <title>Evaluation and characterization of a porcine small intestine cDNA library: analysis of 839 clones.</title>
        <authorList>
            <person name="Winteroe A.K."/>
            <person name="Fredholm M."/>
            <person name="Davies W."/>
        </authorList>
    </citation>
    <scope>NUCLEOTIDE SEQUENCE [LARGE SCALE MRNA]</scope>
    <source>
        <tissue>Small intestine</tissue>
    </source>
</reference>
<protein>
    <recommendedName>
        <fullName>Polymeric immunoglobulin receptor</fullName>
        <shortName>PIgR</shortName>
        <shortName>Poly-Ig receptor</shortName>
    </recommendedName>
</protein>
<comment type="function">
    <text evidence="1">Mediates selective transcytosis of polymeric IgA and IgM across mucosal epithelial cells. Binds polymeric IgA and IgM at the basolateral surface of epithelial cells. The complex is then transported across the cell to be secreted at the apical surface. During this process, a cleavage occurs that separates the extracellular (known as the secretory component) from the transmembrane segment (By similarity). Through its N-linked glycans ensures anchoring of secretory IgA (sIgA) molecules to mucus lining the epithelial surface to neutralize extracellular pathogens. On its own (free form) may act as a non-specific microbial scavenger to prevent pathogen interaction with epithelial cells (By similarity).</text>
</comment>
<comment type="subunit">
    <text evidence="1">Interacts (mainly via CDR1-like domain) with dimeric IgA. Interacts (mainly via CDR2-like domain) with pentameric IgM (By similarity). Either free or part of the secretory IgA (sIgA) complex that consists of two, four or five IgA monomers, and two additional non-Ig polypeptides, namely the JCHAIN and the secretory component (the proteolytic product of PIGR). Free secretory component interacts with bacterial antigens toxA of C.difficile and eaeA of E.coli (By similarity).</text>
</comment>
<comment type="subcellular location">
    <subcellularLocation>
        <location evidence="1">Cell membrane</location>
        <topology evidence="2">Single-pass type I membrane protein</topology>
    </subcellularLocation>
    <subcellularLocation>
        <location evidence="1">Secreted</location>
    </subcellularLocation>
</comment>
<comment type="PTM">
    <text evidence="1">N-glycosylated. N-glycosylation is required for anchoring IgA molecules to mucus, but is not necessary for Ig binding.</text>
</comment>
<dbReference type="EMBL" id="F14851">
    <property type="protein sequence ID" value="CAA23294.1"/>
    <property type="molecule type" value="mRNA"/>
</dbReference>
<dbReference type="STRING" id="9823.ENSSSCP00000041896"/>
<dbReference type="PaxDb" id="9823-ENSSSCP00000016593"/>
<dbReference type="PeptideAtlas" id="Q29244"/>
<dbReference type="eggNOG" id="ENOG502QPKT">
    <property type="taxonomic scope" value="Eukaryota"/>
</dbReference>
<dbReference type="InParanoid" id="Q29244"/>
<dbReference type="Proteomes" id="UP000008227">
    <property type="component" value="Unplaced"/>
</dbReference>
<dbReference type="Proteomes" id="UP000314985">
    <property type="component" value="Unplaced"/>
</dbReference>
<dbReference type="Proteomes" id="UP000694570">
    <property type="component" value="Unplaced"/>
</dbReference>
<dbReference type="Proteomes" id="UP000694571">
    <property type="component" value="Unplaced"/>
</dbReference>
<dbReference type="Proteomes" id="UP000694720">
    <property type="component" value="Unplaced"/>
</dbReference>
<dbReference type="Proteomes" id="UP000694722">
    <property type="component" value="Unplaced"/>
</dbReference>
<dbReference type="Proteomes" id="UP000694723">
    <property type="component" value="Unplaced"/>
</dbReference>
<dbReference type="Proteomes" id="UP000694724">
    <property type="component" value="Unplaced"/>
</dbReference>
<dbReference type="Proteomes" id="UP000694725">
    <property type="component" value="Unplaced"/>
</dbReference>
<dbReference type="Proteomes" id="UP000694726">
    <property type="component" value="Unplaced"/>
</dbReference>
<dbReference type="Proteomes" id="UP000694727">
    <property type="component" value="Unplaced"/>
</dbReference>
<dbReference type="Proteomes" id="UP000694728">
    <property type="component" value="Unplaced"/>
</dbReference>
<dbReference type="GO" id="GO:0005576">
    <property type="term" value="C:extracellular region"/>
    <property type="evidence" value="ECO:0007669"/>
    <property type="project" value="UniProtKB-SubCell"/>
</dbReference>
<dbReference type="GO" id="GO:0005886">
    <property type="term" value="C:plasma membrane"/>
    <property type="evidence" value="ECO:0007669"/>
    <property type="project" value="UniProtKB-SubCell"/>
</dbReference>
<dbReference type="Gene3D" id="2.60.40.10">
    <property type="entry name" value="Immunoglobulins"/>
    <property type="match status" value="1"/>
</dbReference>
<dbReference type="InterPro" id="IPR050671">
    <property type="entry name" value="CD300_family_receptors"/>
</dbReference>
<dbReference type="InterPro" id="IPR036179">
    <property type="entry name" value="Ig-like_dom_sf"/>
</dbReference>
<dbReference type="InterPro" id="IPR013783">
    <property type="entry name" value="Ig-like_fold"/>
</dbReference>
<dbReference type="InterPro" id="IPR013106">
    <property type="entry name" value="Ig_V-set"/>
</dbReference>
<dbReference type="PANTHER" id="PTHR11860:SF87">
    <property type="entry name" value="CMRF35-LIKE MOLECULE 8"/>
    <property type="match status" value="1"/>
</dbReference>
<dbReference type="PANTHER" id="PTHR11860">
    <property type="entry name" value="POLYMERIC-IMMUNOGLOBULIN RECEPTOR"/>
    <property type="match status" value="1"/>
</dbReference>
<dbReference type="Pfam" id="PF07686">
    <property type="entry name" value="V-set"/>
    <property type="match status" value="1"/>
</dbReference>
<dbReference type="SUPFAM" id="SSF48726">
    <property type="entry name" value="Immunoglobulin"/>
    <property type="match status" value="1"/>
</dbReference>
<feature type="chain" id="PRO_0000072702" description="Polymeric immunoglobulin receptor">
    <location>
        <begin position="1" status="less than"/>
        <end position="102" status="greater than"/>
    </location>
</feature>
<feature type="non-terminal residue">
    <location>
        <position position="1"/>
    </location>
</feature>
<feature type="non-terminal residue">
    <location>
        <position position="102"/>
    </location>
</feature>
<proteinExistence type="evidence at transcript level"/>
<sequence length="102" mass="11206">DLQVLKPEPELIYGDLRGSVTFDCALGQEMANVAKFLCQLKNGKTCNVVINTLGKKAQDFEGRILLTPKENSHFSVHITGLRKEDAGHYLCGXHPDGEPKEG</sequence>
<keyword id="KW-1003">Cell membrane</keyword>
<keyword id="KW-0393">Immunoglobulin domain</keyword>
<keyword id="KW-0472">Membrane</keyword>
<keyword id="KW-1185">Reference proteome</keyword>
<keyword id="KW-0677">Repeat</keyword>
<keyword id="KW-0964">Secreted</keyword>
<keyword id="KW-0812">Transmembrane</keyword>
<evidence type="ECO:0000250" key="1">
    <source>
        <dbReference type="UniProtKB" id="P01833"/>
    </source>
</evidence>
<evidence type="ECO:0000255" key="2"/>
<organism>
    <name type="scientific">Sus scrofa</name>
    <name type="common">Pig</name>
    <dbReference type="NCBI Taxonomy" id="9823"/>
    <lineage>
        <taxon>Eukaryota</taxon>
        <taxon>Metazoa</taxon>
        <taxon>Chordata</taxon>
        <taxon>Craniata</taxon>
        <taxon>Vertebrata</taxon>
        <taxon>Euteleostomi</taxon>
        <taxon>Mammalia</taxon>
        <taxon>Eutheria</taxon>
        <taxon>Laurasiatheria</taxon>
        <taxon>Artiodactyla</taxon>
        <taxon>Suina</taxon>
        <taxon>Suidae</taxon>
        <taxon>Sus</taxon>
    </lineage>
</organism>